<dbReference type="EC" id="3.4.19.12"/>
<dbReference type="EMBL" id="AF202453">
    <property type="protein sequence ID" value="AAF17574.1"/>
    <property type="molecule type" value="mRNA"/>
</dbReference>
<dbReference type="EMBL" id="AF202454">
    <property type="protein sequence ID" value="AAF17575.1"/>
    <property type="molecule type" value="mRNA"/>
</dbReference>
<dbReference type="EMBL" id="AF106658">
    <property type="protein sequence ID" value="AAF14189.1"/>
    <property type="molecule type" value="mRNA"/>
</dbReference>
<dbReference type="EMBL" id="AF106659">
    <property type="protein sequence ID" value="AAF14190.1"/>
    <property type="molecule type" value="mRNA"/>
</dbReference>
<dbReference type="EMBL" id="CH473975">
    <property type="protein sequence ID" value="EDL95274.1"/>
    <property type="molecule type" value="Genomic_DNA"/>
</dbReference>
<dbReference type="EMBL" id="CH473975">
    <property type="protein sequence ID" value="EDL95276.1"/>
    <property type="molecule type" value="Genomic_DNA"/>
</dbReference>
<dbReference type="EMBL" id="CH473975">
    <property type="protein sequence ID" value="EDL95277.1"/>
    <property type="molecule type" value="Genomic_DNA"/>
</dbReference>
<dbReference type="EMBL" id="BC085719">
    <property type="protein sequence ID" value="AAH85719.1"/>
    <property type="molecule type" value="mRNA"/>
</dbReference>
<dbReference type="RefSeq" id="NP_446226.3">
    <molecule id="Q5U349-1"/>
    <property type="nucleotide sequence ID" value="NM_053774.3"/>
</dbReference>
<dbReference type="RefSeq" id="XP_006242923.1">
    <property type="nucleotide sequence ID" value="XM_006242861.3"/>
</dbReference>
<dbReference type="RefSeq" id="XP_006242925.1">
    <molecule id="Q5U349-2"/>
    <property type="nucleotide sequence ID" value="XM_006242863.5"/>
</dbReference>
<dbReference type="RefSeq" id="XP_038936630.1">
    <molecule id="Q5U349-1"/>
    <property type="nucleotide sequence ID" value="XM_039080702.2"/>
</dbReference>
<dbReference type="RefSeq" id="XP_038936631.1">
    <molecule id="Q5U349-1"/>
    <property type="nucleotide sequence ID" value="XM_039080703.2"/>
</dbReference>
<dbReference type="RefSeq" id="XP_038936632.1">
    <molecule id="Q5U349-1"/>
    <property type="nucleotide sequence ID" value="XM_039080704.2"/>
</dbReference>
<dbReference type="SMR" id="Q5U349"/>
<dbReference type="BioGRID" id="250433">
    <property type="interactions" value="3"/>
</dbReference>
<dbReference type="DIP" id="DIP-48683N"/>
<dbReference type="FunCoup" id="Q5U349">
    <property type="interactions" value="100"/>
</dbReference>
<dbReference type="IntAct" id="Q5U349">
    <property type="interactions" value="1"/>
</dbReference>
<dbReference type="STRING" id="10116.ENSRNOP00000009975"/>
<dbReference type="MEROPS" id="C19.013"/>
<dbReference type="PhosphoSitePlus" id="Q5U349"/>
<dbReference type="PaxDb" id="10116-ENSRNOP00000009975"/>
<dbReference type="Ensembl" id="ENSRNOT00000036051.7">
    <molecule id="Q5U349-2"/>
    <property type="protein sequence ID" value="ENSRNOP00000030257.4"/>
    <property type="gene ID" value="ENSRNOG00000006663.9"/>
</dbReference>
<dbReference type="Ensembl" id="ENSRNOT00000104911.1">
    <molecule id="Q5U349-1"/>
    <property type="protein sequence ID" value="ENSRNOP00000078529.1"/>
    <property type="gene ID" value="ENSRNOG00000006663.9"/>
</dbReference>
<dbReference type="GeneID" id="115771"/>
<dbReference type="KEGG" id="rno:115771"/>
<dbReference type="UCSC" id="RGD:621073">
    <molecule id="Q5U349-1"/>
    <property type="organism name" value="rat"/>
</dbReference>
<dbReference type="AGR" id="RGD:621073"/>
<dbReference type="CTD" id="9099"/>
<dbReference type="RGD" id="621073">
    <property type="gene designation" value="Usp2"/>
</dbReference>
<dbReference type="eggNOG" id="KOG1868">
    <property type="taxonomic scope" value="Eukaryota"/>
</dbReference>
<dbReference type="GeneTree" id="ENSGT00940000161289"/>
<dbReference type="HOGENOM" id="CLU_008279_1_2_1"/>
<dbReference type="InParanoid" id="Q5U349"/>
<dbReference type="OMA" id="QQANKAW"/>
<dbReference type="OrthoDB" id="265306at2759"/>
<dbReference type="PhylomeDB" id="Q5U349"/>
<dbReference type="TreeFam" id="TF106277"/>
<dbReference type="Reactome" id="R-RNO-5357786">
    <property type="pathway name" value="TNFR1-induced proapoptotic signaling"/>
</dbReference>
<dbReference type="Reactome" id="R-RNO-5357905">
    <property type="pathway name" value="Regulation of TNFR1 signaling"/>
</dbReference>
<dbReference type="Reactome" id="R-RNO-5357956">
    <property type="pathway name" value="TNFR1-induced NF-kappa-B signaling pathway"/>
</dbReference>
<dbReference type="Reactome" id="R-RNO-5689880">
    <property type="pathway name" value="Ub-specific processing proteases"/>
</dbReference>
<dbReference type="Reactome" id="R-RNO-6804757">
    <property type="pathway name" value="Regulation of TP53 Degradation"/>
</dbReference>
<dbReference type="PRO" id="PR:Q5U349"/>
<dbReference type="Proteomes" id="UP000002494">
    <property type="component" value="Chromosome 8"/>
</dbReference>
<dbReference type="Proteomes" id="UP000234681">
    <property type="component" value="Chromosome 8"/>
</dbReference>
<dbReference type="Bgee" id="ENSRNOG00000006663">
    <property type="expression patterns" value="Expressed in testis and 19 other cell types or tissues"/>
</dbReference>
<dbReference type="GO" id="GO:0005813">
    <property type="term" value="C:centrosome"/>
    <property type="evidence" value="ECO:0000314"/>
    <property type="project" value="RGD"/>
</dbReference>
<dbReference type="GO" id="GO:0005737">
    <property type="term" value="C:cytoplasm"/>
    <property type="evidence" value="ECO:0000266"/>
    <property type="project" value="RGD"/>
</dbReference>
<dbReference type="GO" id="GO:0016020">
    <property type="term" value="C:membrane"/>
    <property type="evidence" value="ECO:0007669"/>
    <property type="project" value="UniProtKB-SubCell"/>
</dbReference>
<dbReference type="GO" id="GO:0005634">
    <property type="term" value="C:nucleus"/>
    <property type="evidence" value="ECO:0000314"/>
    <property type="project" value="UniProtKB"/>
</dbReference>
<dbReference type="GO" id="GO:0048471">
    <property type="term" value="C:perinuclear region of cytoplasm"/>
    <property type="evidence" value="ECO:0000314"/>
    <property type="project" value="UniProtKB"/>
</dbReference>
<dbReference type="GO" id="GO:0030332">
    <property type="term" value="F:cyclin binding"/>
    <property type="evidence" value="ECO:0000266"/>
    <property type="project" value="RGD"/>
</dbReference>
<dbReference type="GO" id="GO:0004843">
    <property type="term" value="F:cysteine-type deubiquitinase activity"/>
    <property type="evidence" value="ECO:0000315"/>
    <property type="project" value="UniProtKB"/>
</dbReference>
<dbReference type="GO" id="GO:0042802">
    <property type="term" value="F:identical protein binding"/>
    <property type="evidence" value="ECO:0000266"/>
    <property type="project" value="RGD"/>
</dbReference>
<dbReference type="GO" id="GO:0046872">
    <property type="term" value="F:metal ion binding"/>
    <property type="evidence" value="ECO:0007669"/>
    <property type="project" value="UniProtKB-KW"/>
</dbReference>
<dbReference type="GO" id="GO:0031625">
    <property type="term" value="F:ubiquitin protein ligase binding"/>
    <property type="evidence" value="ECO:0000266"/>
    <property type="project" value="RGD"/>
</dbReference>
<dbReference type="GO" id="GO:0048512">
    <property type="term" value="P:circadian behavior"/>
    <property type="evidence" value="ECO:0000250"/>
    <property type="project" value="UniProtKB"/>
</dbReference>
<dbReference type="GO" id="GO:0032922">
    <property type="term" value="P:circadian regulation of gene expression"/>
    <property type="evidence" value="ECO:0000250"/>
    <property type="project" value="UniProtKB"/>
</dbReference>
<dbReference type="GO" id="GO:0043153">
    <property type="term" value="P:entrainment of circadian clock by photoperiod"/>
    <property type="evidence" value="ECO:0000250"/>
    <property type="project" value="UniProtKB"/>
</dbReference>
<dbReference type="GO" id="GO:0045475">
    <property type="term" value="P:locomotor rhythm"/>
    <property type="evidence" value="ECO:0000250"/>
    <property type="project" value="UniProtKB"/>
</dbReference>
<dbReference type="GO" id="GO:0007517">
    <property type="term" value="P:muscle organ development"/>
    <property type="evidence" value="ECO:0007669"/>
    <property type="project" value="UniProtKB-KW"/>
</dbReference>
<dbReference type="GO" id="GO:0048642">
    <property type="term" value="P:negative regulation of skeletal muscle tissue development"/>
    <property type="evidence" value="ECO:0000314"/>
    <property type="project" value="UniProtKB"/>
</dbReference>
<dbReference type="GO" id="GO:0000122">
    <property type="term" value="P:negative regulation of transcription by RNA polymerase II"/>
    <property type="evidence" value="ECO:0000250"/>
    <property type="project" value="UniProtKB"/>
</dbReference>
<dbReference type="GO" id="GO:0045931">
    <property type="term" value="P:positive regulation of mitotic cell cycle"/>
    <property type="evidence" value="ECO:0000250"/>
    <property type="project" value="UniProtKB"/>
</dbReference>
<dbReference type="GO" id="GO:0048643">
    <property type="term" value="P:positive regulation of skeletal muscle tissue development"/>
    <property type="evidence" value="ECO:0000314"/>
    <property type="project" value="UniProtKB"/>
</dbReference>
<dbReference type="GO" id="GO:0016579">
    <property type="term" value="P:protein deubiquitination"/>
    <property type="evidence" value="ECO:0000314"/>
    <property type="project" value="UniProtKB"/>
</dbReference>
<dbReference type="GO" id="GO:0050821">
    <property type="term" value="P:protein stabilization"/>
    <property type="evidence" value="ECO:0000250"/>
    <property type="project" value="UniProtKB"/>
</dbReference>
<dbReference type="GO" id="GO:0006508">
    <property type="term" value="P:proteolysis"/>
    <property type="evidence" value="ECO:0007669"/>
    <property type="project" value="UniProtKB-KW"/>
</dbReference>
<dbReference type="CDD" id="cd02674">
    <property type="entry name" value="Peptidase_C19R"/>
    <property type="match status" value="1"/>
</dbReference>
<dbReference type="FunFam" id="3.90.70.10:FF:000024">
    <property type="entry name" value="Ubiquitin carboxyl-terminal hydrolase 2"/>
    <property type="match status" value="1"/>
</dbReference>
<dbReference type="Gene3D" id="3.90.70.10">
    <property type="entry name" value="Cysteine proteinases"/>
    <property type="match status" value="1"/>
</dbReference>
<dbReference type="InterPro" id="IPR038765">
    <property type="entry name" value="Papain-like_cys_pep_sf"/>
</dbReference>
<dbReference type="InterPro" id="IPR001394">
    <property type="entry name" value="Peptidase_C19_UCH"/>
</dbReference>
<dbReference type="InterPro" id="IPR050185">
    <property type="entry name" value="Ub_carboxyl-term_hydrolase"/>
</dbReference>
<dbReference type="InterPro" id="IPR018200">
    <property type="entry name" value="USP_CS"/>
</dbReference>
<dbReference type="InterPro" id="IPR028889">
    <property type="entry name" value="USP_dom"/>
</dbReference>
<dbReference type="PANTHER" id="PTHR21646">
    <property type="entry name" value="UBIQUITIN CARBOXYL-TERMINAL HYDROLASE"/>
    <property type="match status" value="1"/>
</dbReference>
<dbReference type="PANTHER" id="PTHR21646:SF17">
    <property type="entry name" value="UBIQUITIN CARBOXYL-TERMINAL HYDROLASE 2"/>
    <property type="match status" value="1"/>
</dbReference>
<dbReference type="Pfam" id="PF00443">
    <property type="entry name" value="UCH"/>
    <property type="match status" value="1"/>
</dbReference>
<dbReference type="SUPFAM" id="SSF54001">
    <property type="entry name" value="Cysteine proteinases"/>
    <property type="match status" value="1"/>
</dbReference>
<dbReference type="PROSITE" id="PS00972">
    <property type="entry name" value="USP_1"/>
    <property type="match status" value="1"/>
</dbReference>
<dbReference type="PROSITE" id="PS00973">
    <property type="entry name" value="USP_2"/>
    <property type="match status" value="1"/>
</dbReference>
<dbReference type="PROSITE" id="PS50235">
    <property type="entry name" value="USP_3"/>
    <property type="match status" value="1"/>
</dbReference>
<comment type="function">
    <text evidence="1 2 6 7 9">Hydrolase that deubiquitinates polyubiquitinated target proteins such as MDM2, MDM4 and CCND1 (By similarity). Isoform 1 and isoform 2 possess both ubiquitin-specific peptidase and isopeptidase activities (PubMed:12107281). Deubiquitinates MDM2 without reversing MDM2-mediated p53/TP53 ubiquitination and thus indirectly promotes p53/TP53 degradation and limits p53 activity (By similarity). Has no deubiquitinase activity against p53/TP53 (By similarity). Prevents MDM2-mediated degradation of MDM4 (By similarity). Plays a role in the G1/S cell-cycle progression in normal and cancer cells (By similarity). Regulates the circadian clock by modulating its intrinsic circadian rhythm and its capacity to respond to external cues (PubMed:23213472). Associates with clock proteins and deubiquitinates core clock component PER1 but does not affect its overall stability (PubMed:23213472). Regulates the nucleocytoplasmic shuttling and nuclear retention of PER1 and its repressive role on the clock transcription factors CLOCK and BMAL1 (By similarity). Plays a role in the regulation of myogenic differentiation of embryonic muscle cells (PubMed:12107281).</text>
</comment>
<comment type="function">
    <molecule>Isoform 2</molecule>
    <text evidence="2">Circadian clock output effector that regulates Ca(2+) absorption in the small intestine. Probably functions by regulating protein levels of the membrane scaffold protein NHERF4 in a rhythmic manner, and is therefore likely to control Ca(2+) membrane permeability mediated by the Ca(2+) channel TRPV6 in the intestine.</text>
</comment>
<comment type="catalytic activity">
    <reaction>
        <text>Thiol-dependent hydrolysis of ester, thioester, amide, peptide and isopeptide bonds formed by the C-terminal Gly of ubiquitin (a 76-residue protein attached to proteins as an intracellular targeting signal).</text>
        <dbReference type="EC" id="3.4.19.12"/>
    </reaction>
</comment>
<comment type="activity regulation">
    <text evidence="1 6">Cleavage is inhibited by ubiquitin in a dosage-dependent manner (By similarity). Cleavage is blocked by ubiquitin aldehyde.</text>
</comment>
<comment type="subunit">
    <text evidence="1 2 9">Homooligomer. Found in trimeric complex with MDM2 and MDM4 and USP2. Interacts with CCND1; the interaction is direct and promotes its stabilization by antagonizing ubiquitin-dependent degradation. Interacts (via N-terminus and C-terminus) with MDM2. Interacts with MDM4 (By similarity). Interacts with PER1. Interacts with KCNQ1; counteracts the NEDD4L-specific down-regulation of I(Ks) and restores plasma membrane localization of KCNQ1 (By similarity). Isoform 4: Interacts with NHERF4 and CLTC (By similarity).</text>
</comment>
<comment type="subcellular location">
    <subcellularLocation>
        <location evidence="2">Cytoplasm</location>
    </subcellularLocation>
</comment>
<comment type="subcellular location">
    <molecule>Isoform 1</molecule>
    <subcellularLocation>
        <location evidence="7">Cytoplasm</location>
        <location evidence="7">Perinuclear region</location>
    </subcellularLocation>
    <text evidence="7">Localizes in the spermatid head in late-elongating spermatids in the thin area between the outer acrosomal membrane and the plasma membrane.</text>
</comment>
<comment type="subcellular location">
    <molecule>Isoform 2</molecule>
    <subcellularLocation>
        <location evidence="7">Nucleus</location>
    </subcellularLocation>
    <subcellularLocation>
        <location evidence="2">Membrane</location>
        <topology evidence="12">Peripheral membrane protein</topology>
    </subcellularLocation>
    <subcellularLocation>
        <location evidence="2">Cytoplasm</location>
    </subcellularLocation>
    <text evidence="2">Predominantly expressed at membranes.</text>
</comment>
<comment type="alternative products">
    <event type="alternative splicing"/>
    <isoform>
        <id>Q5U349-1</id>
        <name>1</name>
        <name>Ubp69</name>
        <name>Ubp-t2</name>
        <sequence type="displayed"/>
    </isoform>
    <isoform>
        <id>Q5U349-2</id>
        <name>2</name>
        <name>Ubp45</name>
        <name>Ubp-t1</name>
        <sequence type="described" ref="VSP_039561"/>
    </isoform>
</comment>
<comment type="tissue specificity">
    <text evidence="6 7 8">Expressed in mesangial cells of the kidney. Isoform 1 and isoform 2 are expressed in elongated spermatids; the shorter form appearing earlier than the longer form (at protein level). Isoform 1 and isoform 2 are expressed in early round spermatids of the testis. Isoform 1 is expressed in muscle and heart. Isoform 2 is expressed in muscle, lung, heart, brain, liver and ovary. During muscle differentiation, isoform 1 expression increases before the onset of membrane fusion and decreases as the myogenic processes proceeded; un counterpart, isoform 2 expression remains low until the burst of membrane fusion but increases thereafter.</text>
</comment>
<comment type="induction">
    <text evidence="7 8">Up-regulated by IL-1. Isoform 1 is up-regulated with any signal for withdrawal from the cell cycle such as serum deprivation.</text>
</comment>
<comment type="domain">
    <text evidence="7">The different N-terminus extensions of isoform 1 and isoform 2 determine their respective subcellular localization and differential effect on myoblast fusion and accumulation of muscle-specific proteins. The different N-terminus extensions of isoform 1 and isoform 2 are not essential for their catalytic activity.</text>
</comment>
<comment type="miscellaneous">
    <molecule>Isoform 1</molecule>
    <text>Stimulates both membrane fusion during myogenesis and accumulation of muscle-specific proteins.</text>
</comment>
<comment type="miscellaneous">
    <molecule>Isoform 2</molecule>
    <text evidence="12">Inhibits both membrane fusion during myogenesis and accumulation of muscle-specific proteins.</text>
</comment>
<comment type="similarity">
    <text evidence="12">Belongs to the peptidase C19 family. USP2 subfamily.</text>
</comment>
<gene>
    <name type="primary">Usp2</name>
    <name type="synonym">Ubp41</name>
    <name type="synonym">Ubp69</name>
</gene>
<evidence type="ECO:0000250" key="1">
    <source>
        <dbReference type="UniProtKB" id="O75604"/>
    </source>
</evidence>
<evidence type="ECO:0000250" key="2">
    <source>
        <dbReference type="UniProtKB" id="O88623"/>
    </source>
</evidence>
<evidence type="ECO:0000255" key="3">
    <source>
        <dbReference type="PROSITE-ProRule" id="PRU10092"/>
    </source>
</evidence>
<evidence type="ECO:0000255" key="4">
    <source>
        <dbReference type="PROSITE-ProRule" id="PRU10093"/>
    </source>
</evidence>
<evidence type="ECO:0000256" key="5">
    <source>
        <dbReference type="SAM" id="MobiDB-lite"/>
    </source>
</evidence>
<evidence type="ECO:0000269" key="6">
    <source>
    </source>
</evidence>
<evidence type="ECO:0000269" key="7">
    <source>
    </source>
</evidence>
<evidence type="ECO:0000269" key="8">
    <source>
    </source>
</evidence>
<evidence type="ECO:0000269" key="9">
    <source>
    </source>
</evidence>
<evidence type="ECO:0000303" key="10">
    <source>
    </source>
</evidence>
<evidence type="ECO:0000303" key="11">
    <source>
    </source>
</evidence>
<evidence type="ECO:0000305" key="12"/>
<feature type="chain" id="PRO_0000395966" description="Ubiquitin carboxyl-terminal hydrolase 2">
    <location>
        <begin position="1"/>
        <end position="618"/>
    </location>
</feature>
<feature type="domain" description="USP">
    <location>
        <begin position="280"/>
        <end position="612"/>
    </location>
</feature>
<feature type="region of interest" description="Necessary for interaction with MDM4" evidence="1">
    <location>
        <begin position="1"/>
        <end position="213"/>
    </location>
</feature>
<feature type="region of interest" description="Disordered" evidence="5">
    <location>
        <begin position="54"/>
        <end position="112"/>
    </location>
</feature>
<feature type="region of interest" description="Disordered" evidence="5">
    <location>
        <begin position="246"/>
        <end position="274"/>
    </location>
</feature>
<feature type="region of interest" description="Necessary for interaction with MDM4" evidence="1">
    <location>
        <begin position="416"/>
        <end position="516"/>
    </location>
</feature>
<feature type="compositionally biased region" description="Basic and acidic residues" evidence="5">
    <location>
        <begin position="90"/>
        <end position="100"/>
    </location>
</feature>
<feature type="compositionally biased region" description="Polar residues" evidence="5">
    <location>
        <begin position="255"/>
        <end position="274"/>
    </location>
</feature>
<feature type="active site" description="Nucleophile" evidence="3 4">
    <location>
        <position position="289"/>
    </location>
</feature>
<feature type="active site" description="Proton acceptor" evidence="3 4">
    <location>
        <position position="570"/>
    </location>
</feature>
<feature type="binding site" evidence="1">
    <location>
        <position position="438"/>
    </location>
    <ligand>
        <name>Zn(2+)</name>
        <dbReference type="ChEBI" id="CHEBI:29105"/>
    </ligand>
</feature>
<feature type="binding site" evidence="1">
    <location>
        <position position="441"/>
    </location>
    <ligand>
        <name>Zn(2+)</name>
        <dbReference type="ChEBI" id="CHEBI:29105"/>
    </ligand>
</feature>
<feature type="binding site" evidence="1">
    <location>
        <position position="489"/>
    </location>
    <ligand>
        <name>Zn(2+)</name>
        <dbReference type="ChEBI" id="CHEBI:29105"/>
    </ligand>
</feature>
<feature type="binding site" evidence="1">
    <location>
        <position position="492"/>
    </location>
    <ligand>
        <name>Zn(2+)</name>
        <dbReference type="ChEBI" id="CHEBI:29105"/>
    </ligand>
</feature>
<feature type="splice variant" id="VSP_039561" description="In isoform 2." evidence="10 11">
    <original>MSQLSSTLKRYTESSRYTDAPYAKSGYGTYTPSSYGANLAASFLEKEKLGFKPVSPTSFLPRPRTYGPSSILDCDRGRPLLRSDITGGSKRSESQTRGNERPSGSGLNGGSGFPYGVTSNSLSYLPMNARDQGVTLGQKKSNSQSDLARDFSSLRTSDSYRTSDGYRASDGFRIDPGNLGRSPMLARTRKELCALQGLYQAASRSEYLTDYLENYGRKGSAPQVLTQAPPSRVPEVLSPTYRPSGRYTLWEKNKGQASGPSRSTSPGRDTM</original>
    <variation>MRTSYTVTLPEEPPAAPFPALAKELRPRSPLSPSLLLSTFVGLLLNKAK</variation>
    <location>
        <begin position="1"/>
        <end position="271"/>
    </location>
</feature>
<feature type="mutagenesis site" description="Loss of enzymatic activity. Reduces both membrane fusion during myogenesis and accumulation of muscle-specific proteins." evidence="7">
    <original>C</original>
    <variation>S</variation>
    <location>
        <position position="289"/>
    </location>
</feature>
<feature type="sequence conflict" description="In Ref. 1; AAF17574." evidence="12" ref="1">
    <original>F</original>
    <variation>S</variation>
    <location>
        <position position="172"/>
    </location>
</feature>
<feature type="sequence conflict" description="In Ref. 2; AAF14190." evidence="12" ref="2">
    <original>A</original>
    <variation>T</variation>
    <location>
        <position position="202"/>
    </location>
</feature>
<feature type="sequence conflict" description="In Ref. 1; AAF17574." evidence="12" ref="1">
    <original>P</original>
    <variation>A</variation>
    <location>
        <position position="260"/>
    </location>
</feature>
<feature type="sequence conflict" description="In Ref. 2; AAF14189/AAF14190." evidence="12" ref="2">
    <original>L</original>
    <variation>F</variation>
    <location>
        <position position="607"/>
    </location>
</feature>
<accession>Q5U349</accession>
<accession>Q9QXL3</accession>
<accession>Q9QXL4</accession>
<accession>Q9R083</accession>
<accession>Q9R084</accession>
<reference key="1">
    <citation type="journal article" date="2000" name="Mol. Cell. Biol.">
        <title>Divergent N-terminal sequences target an inducible testis deubiquitinating enzyme to distinct subcellular structures.</title>
        <authorList>
            <person name="Lin H."/>
            <person name="Keriel A."/>
            <person name="Morales C.R."/>
            <person name="Bedard N."/>
            <person name="Zhao Q."/>
            <person name="Hingamp P."/>
            <person name="Lefrancois S."/>
            <person name="Combaret L."/>
            <person name="Wing S.S."/>
        </authorList>
    </citation>
    <scope>NUCLEOTIDE SEQUENCE [MRNA] (ISOFORMS 1 AND 2)</scope>
    <scope>FUNCTION</scope>
    <scope>ACTIVITY REGULATION</scope>
    <scope>TISSUE SPECIFICITY</scope>
    <source>
        <tissue>Testis</tissue>
    </source>
</reference>
<reference key="2">
    <citation type="journal article" date="2002" name="Proc. Natl. Acad. Sci. U.S.A.">
        <title>Antagonistic regulation of myogenesis by two deubiquitinating enzymes, UBP45 and UBP69.</title>
        <authorList>
            <person name="Park K.C."/>
            <person name="Kim J.H."/>
            <person name="Choi E.J."/>
            <person name="Min S.W."/>
            <person name="Rhee S."/>
            <person name="Baek S.H."/>
            <person name="Chung S.S."/>
            <person name="Bang O."/>
            <person name="Park D."/>
            <person name="Chiba T."/>
            <person name="Tanaka K."/>
            <person name="Chung C.H."/>
        </authorList>
    </citation>
    <scope>NUCLEOTIDE SEQUENCE [MRNA] (ISOFORMS 1 AND 2)</scope>
    <scope>FUNCTION</scope>
    <scope>SUBCELLULAR LOCATION</scope>
    <scope>INDUCTION</scope>
    <scope>MUTAGENESIS OF CYS-289</scope>
    <scope>TISSUE SPECIFICITY</scope>
    <scope>DOMAIN</scope>
    <source>
        <tissue>Skeletal muscle</tissue>
    </source>
</reference>
<reference key="3">
    <citation type="submission" date="2005-07" db="EMBL/GenBank/DDBJ databases">
        <authorList>
            <person name="Mural R.J."/>
            <person name="Adams M.D."/>
            <person name="Myers E.W."/>
            <person name="Smith H.O."/>
            <person name="Venter J.C."/>
        </authorList>
    </citation>
    <scope>NUCLEOTIDE SEQUENCE [LARGE SCALE GENOMIC DNA]</scope>
    <source>
        <strain>Brown Norway</strain>
    </source>
</reference>
<reference key="4">
    <citation type="journal article" date="2004" name="Genome Res.">
        <title>The status, quality, and expansion of the NIH full-length cDNA project: the Mammalian Gene Collection (MGC).</title>
        <authorList>
            <consortium name="The MGC Project Team"/>
        </authorList>
    </citation>
    <scope>NUCLEOTIDE SEQUENCE [LARGE SCALE MRNA] (ISOFORM 1)</scope>
    <source>
        <tissue>Heart</tissue>
    </source>
</reference>
<reference key="5">
    <citation type="journal article" date="2010" name="Pathol. Int.">
        <title>Expression of USP2-69 in mesangial cells in vivo and in vitro.</title>
        <authorList>
            <person name="Wang S."/>
            <person name="Wu H."/>
            <person name="Liu Y."/>
            <person name="Sun J."/>
            <person name="Zhao Z."/>
            <person name="Chen Q."/>
            <person name="Guo M."/>
            <person name="Ma D."/>
            <person name="Zhang Z."/>
        </authorList>
    </citation>
    <scope>TISSUE SPECIFICITY</scope>
    <scope>INDUCTION BY IL-1</scope>
</reference>
<reference key="6">
    <citation type="journal article" date="2012" name="Biol. Open">
        <title>Regulation of behavioral circadian rhythms and clock protein PER1 by the deubiquitinating enzyme USP2.</title>
        <authorList>
            <person name="Yang Y."/>
            <person name="Duguay D."/>
            <person name="Bedard N."/>
            <person name="Rachalski A."/>
            <person name="Baquiran G."/>
            <person name="Na C.H."/>
            <person name="Fahrenkrug J."/>
            <person name="Storch K.F."/>
            <person name="Peng J."/>
            <person name="Wing S.S."/>
            <person name="Cermakian N."/>
        </authorList>
    </citation>
    <scope>FUNCTION</scope>
    <scope>INTERACTION WITH PER1</scope>
</reference>
<keyword id="KW-0025">Alternative splicing</keyword>
<keyword id="KW-0090">Biological rhythms</keyword>
<keyword id="KW-0131">Cell cycle</keyword>
<keyword id="KW-0963">Cytoplasm</keyword>
<keyword id="KW-0378">Hydrolase</keyword>
<keyword id="KW-0472">Membrane</keyword>
<keyword id="KW-0479">Metal-binding</keyword>
<keyword id="KW-0517">Myogenesis</keyword>
<keyword id="KW-0539">Nucleus</keyword>
<keyword id="KW-0645">Protease</keyword>
<keyword id="KW-1185">Reference proteome</keyword>
<keyword id="KW-0788">Thiol protease</keyword>
<keyword id="KW-0833">Ubl conjugation pathway</keyword>
<keyword id="KW-0862">Zinc</keyword>
<protein>
    <recommendedName>
        <fullName>Ubiquitin carboxyl-terminal hydrolase 2</fullName>
        <ecNumber>3.4.19.12</ecNumber>
    </recommendedName>
    <alternativeName>
        <fullName>41 kDa ubiquitin-specific protease</fullName>
    </alternativeName>
    <alternativeName>
        <fullName>Deubiquitinating enzyme 2</fullName>
    </alternativeName>
    <alternativeName>
        <fullName>Ubiquitin thioesterase 2</fullName>
    </alternativeName>
    <alternativeName>
        <fullName>Ubiquitin-specific-processing protease 2</fullName>
    </alternativeName>
    <alternativeName>
        <fullName>Ubiquitin-specific-processing protease testis</fullName>
        <shortName>UBP-t</shortName>
    </alternativeName>
</protein>
<name>UBP2_RAT</name>
<organism>
    <name type="scientific">Rattus norvegicus</name>
    <name type="common">Rat</name>
    <dbReference type="NCBI Taxonomy" id="10116"/>
    <lineage>
        <taxon>Eukaryota</taxon>
        <taxon>Metazoa</taxon>
        <taxon>Chordata</taxon>
        <taxon>Craniata</taxon>
        <taxon>Vertebrata</taxon>
        <taxon>Euteleostomi</taxon>
        <taxon>Mammalia</taxon>
        <taxon>Eutheria</taxon>
        <taxon>Euarchontoglires</taxon>
        <taxon>Glires</taxon>
        <taxon>Rodentia</taxon>
        <taxon>Myomorpha</taxon>
        <taxon>Muroidea</taxon>
        <taxon>Muridae</taxon>
        <taxon>Murinae</taxon>
        <taxon>Rattus</taxon>
    </lineage>
</organism>
<sequence>MSQLSSTLKRYTESSRYTDAPYAKSGYGTYTPSSYGANLAASFLEKEKLGFKPVSPTSFLPRPRTYGPSSILDCDRGRPLLRSDITGGSKRSESQTRGNERPSGSGLNGGSGFPYGVTSNSLSYLPMNARDQGVTLGQKKSNSQSDLARDFSSLRTSDSYRTSDGYRASDGFRIDPGNLGRSPMLARTRKELCALQGLYQAASRSEYLTDYLENYGRKGSAPQVLTQAPPSRVPEVLSPTYRPSGRYTLWEKNKGQASGPSRSTSPGRDTMNSKSAQGLAGLRNLGNTCFMNSILQCLSNTRELRDYCLQRLYMRDLGHTSSAHTALMEEFAKLIQTIWTSSPNDVVSPSEFKTQIQRYAPRFVGYNQQDAQEFLRFLLDGLHNEVNRVAARPKPSPESLDHLPDEEKGRQMWRKYLEREDSRIGDLFVGQLKSSLTCTDCGYCSTVFDPFWDLSLPIAKRGYPEVTLMDCMRLFTKEDVLDGDEKPTCCRCRARKRCIKKFSVQRFPKILVLHLKRFSESRIRTSKLTTFVNFPLRDLDLREFASENTNHAVYNLYAVSNHSGTTMGGHYTAYCRSPVTGEWHTFNDSSVTPMSSSQVRTSDAYLLFYELASPPSRM</sequence>
<proteinExistence type="evidence at protein level"/>